<accession>A7ZPT9</accession>
<dbReference type="EMBL" id="CP000800">
    <property type="protein sequence ID" value="ABV20198.1"/>
    <property type="status" value="ALT_INIT"/>
    <property type="molecule type" value="Genomic_DNA"/>
</dbReference>
<dbReference type="RefSeq" id="WP_001307333.1">
    <property type="nucleotide sequence ID" value="NC_009801.1"/>
</dbReference>
<dbReference type="SMR" id="A7ZPT9"/>
<dbReference type="KEGG" id="ecw:EcE24377A_2779"/>
<dbReference type="HOGENOM" id="CLU_072265_1_1_6"/>
<dbReference type="Proteomes" id="UP000001122">
    <property type="component" value="Chromosome"/>
</dbReference>
<dbReference type="GO" id="GO:0006270">
    <property type="term" value="P:DNA replication initiation"/>
    <property type="evidence" value="ECO:0007669"/>
    <property type="project" value="TreeGrafter"/>
</dbReference>
<dbReference type="GO" id="GO:0032297">
    <property type="term" value="P:negative regulation of DNA-templated DNA replication initiation"/>
    <property type="evidence" value="ECO:0007669"/>
    <property type="project" value="InterPro"/>
</dbReference>
<dbReference type="FunFam" id="1.10.8.60:FF:000024">
    <property type="entry name" value="DnaA regulatory inactivator Hda"/>
    <property type="match status" value="1"/>
</dbReference>
<dbReference type="FunFam" id="3.40.50.300:FF:000452">
    <property type="entry name" value="DnaA regulatory inactivator Hda"/>
    <property type="match status" value="1"/>
</dbReference>
<dbReference type="Gene3D" id="1.10.8.60">
    <property type="match status" value="1"/>
</dbReference>
<dbReference type="Gene3D" id="3.40.50.300">
    <property type="entry name" value="P-loop containing nucleotide triphosphate hydrolases"/>
    <property type="match status" value="1"/>
</dbReference>
<dbReference type="HAMAP" id="MF_01158">
    <property type="entry name" value="Hda"/>
    <property type="match status" value="1"/>
</dbReference>
<dbReference type="InterPro" id="IPR020591">
    <property type="entry name" value="Chromosome_initiator_DnaA-like"/>
</dbReference>
<dbReference type="InterPro" id="IPR013317">
    <property type="entry name" value="DnaA_dom"/>
</dbReference>
<dbReference type="InterPro" id="IPR017788">
    <property type="entry name" value="Hda"/>
</dbReference>
<dbReference type="InterPro" id="IPR022864">
    <property type="entry name" value="Hda_Enterobact"/>
</dbReference>
<dbReference type="InterPro" id="IPR055199">
    <property type="entry name" value="Hda_lid"/>
</dbReference>
<dbReference type="InterPro" id="IPR027417">
    <property type="entry name" value="P-loop_NTPase"/>
</dbReference>
<dbReference type="NCBIfam" id="TIGR03420">
    <property type="entry name" value="DnaA_homol_Hda"/>
    <property type="match status" value="1"/>
</dbReference>
<dbReference type="NCBIfam" id="NF005982">
    <property type="entry name" value="PRK08084.1"/>
    <property type="match status" value="1"/>
</dbReference>
<dbReference type="PANTHER" id="PTHR30050">
    <property type="entry name" value="CHROMOSOMAL REPLICATION INITIATOR PROTEIN DNAA"/>
    <property type="match status" value="1"/>
</dbReference>
<dbReference type="PANTHER" id="PTHR30050:SF5">
    <property type="entry name" value="DNAA REGULATORY INACTIVATOR HDA"/>
    <property type="match status" value="1"/>
</dbReference>
<dbReference type="Pfam" id="PF00308">
    <property type="entry name" value="Bac_DnaA"/>
    <property type="match status" value="1"/>
</dbReference>
<dbReference type="Pfam" id="PF22688">
    <property type="entry name" value="Hda_lid"/>
    <property type="match status" value="1"/>
</dbReference>
<dbReference type="PRINTS" id="PR00051">
    <property type="entry name" value="DNAA"/>
</dbReference>
<dbReference type="SUPFAM" id="SSF52540">
    <property type="entry name" value="P-loop containing nucleoside triphosphate hydrolases"/>
    <property type="match status" value="1"/>
</dbReference>
<feature type="chain" id="PRO_1000065559" description="DnaA regulatory inactivator Hda">
    <location>
        <begin position="1"/>
        <end position="233"/>
    </location>
</feature>
<keyword id="KW-0235">DNA replication</keyword>
<keyword id="KW-0236">DNA replication inhibitor</keyword>
<keyword id="KW-1185">Reference proteome</keyword>
<protein>
    <recommendedName>
        <fullName evidence="2">DnaA regulatory inactivator Hda</fullName>
    </recommendedName>
</protein>
<comment type="function">
    <text evidence="1">Mediates the interaction of DNA replication initiator protein DnaA with DNA polymerase subunit beta sliding clamp (dnaN). Stimulates hydrolysis of ATP-DnaA to ADP-DnaA, rendering DnaA inactive for reinitiation, a process called regulatory inhibition of DnaA or RIDA (By similarity).</text>
</comment>
<comment type="subunit">
    <text evidence="2">The active form seems to be an ADP-bound monomer. Forms the RIDA complex (regulatory inactivation of DnaA) of ATP-DnaA, ADP-Hda and the DNA-loaded beta sliding clamp (dnaN).</text>
</comment>
<comment type="similarity">
    <text evidence="2">Belongs to the DnaA family. HdA subfamily.</text>
</comment>
<comment type="sequence caution" evidence="3">
    <conflict type="erroneous initiation">
        <sequence resource="EMBL-CDS" id="ABV20198"/>
    </conflict>
</comment>
<reference key="1">
    <citation type="journal article" date="2008" name="J. Bacteriol.">
        <title>The pangenome structure of Escherichia coli: comparative genomic analysis of E. coli commensal and pathogenic isolates.</title>
        <authorList>
            <person name="Rasko D.A."/>
            <person name="Rosovitz M.J."/>
            <person name="Myers G.S.A."/>
            <person name="Mongodin E.F."/>
            <person name="Fricke W.F."/>
            <person name="Gajer P."/>
            <person name="Crabtree J."/>
            <person name="Sebaihia M."/>
            <person name="Thomson N.R."/>
            <person name="Chaudhuri R."/>
            <person name="Henderson I.R."/>
            <person name="Sperandio V."/>
            <person name="Ravel J."/>
        </authorList>
    </citation>
    <scope>NUCLEOTIDE SEQUENCE [LARGE SCALE GENOMIC DNA]</scope>
    <source>
        <strain>E24377A / ETEC</strain>
    </source>
</reference>
<organism>
    <name type="scientific">Escherichia coli O139:H28 (strain E24377A / ETEC)</name>
    <dbReference type="NCBI Taxonomy" id="331111"/>
    <lineage>
        <taxon>Bacteria</taxon>
        <taxon>Pseudomonadati</taxon>
        <taxon>Pseudomonadota</taxon>
        <taxon>Gammaproteobacteria</taxon>
        <taxon>Enterobacterales</taxon>
        <taxon>Enterobacteriaceae</taxon>
        <taxon>Escherichia</taxon>
    </lineage>
</organism>
<gene>
    <name evidence="2" type="primary">hda</name>
    <name type="ordered locus">EcE24377A_2779</name>
</gene>
<name>HDA_ECO24</name>
<evidence type="ECO:0000250" key="1"/>
<evidence type="ECO:0000255" key="2">
    <source>
        <dbReference type="HAMAP-Rule" id="MF_01158"/>
    </source>
</evidence>
<evidence type="ECO:0000305" key="3"/>
<sequence>MNTPAQLSLPLYLPDDETFASFWPGDNSSLLAALQNVLRQEHSGYIYLWAREGAGRSHLLHAACAELSQRGDAVGYVPLDKRTWFVPEVLDGMEHLSLVCIDNIECIAGDELWEMAIFDLYNRILESGKTRLLITGDRPPRQLNLGLPDLASRLDWGQIYKLQPLSDEDKLQALQLRARLRGFELPEDVGRFLLKRLDREMRTLFMTLDQLDRASITAQRKLTIPFVKEILKL</sequence>
<proteinExistence type="inferred from homology"/>